<dbReference type="EMBL" id="DP000238">
    <property type="protein sequence ID" value="ABK78371.1"/>
    <property type="molecule type" value="Genomic_DNA"/>
</dbReference>
<dbReference type="SMR" id="A0RYF4"/>
<dbReference type="STRING" id="414004.CENSYa_1760"/>
<dbReference type="EnsemblBacteria" id="ABK78371">
    <property type="protein sequence ID" value="ABK78371"/>
    <property type="gene ID" value="CENSYa_1760"/>
</dbReference>
<dbReference type="KEGG" id="csy:CENSYa_1760"/>
<dbReference type="PATRIC" id="fig|414004.10.peg.1605"/>
<dbReference type="HOGENOM" id="CLU_100097_0_0_2"/>
<dbReference type="Proteomes" id="UP000000758">
    <property type="component" value="Chromosome"/>
</dbReference>
<dbReference type="GO" id="GO:0003677">
    <property type="term" value="F:DNA binding"/>
    <property type="evidence" value="ECO:0007669"/>
    <property type="project" value="UniProtKB-KW"/>
</dbReference>
<dbReference type="GO" id="GO:0006355">
    <property type="term" value="P:regulation of DNA-templated transcription"/>
    <property type="evidence" value="ECO:0007669"/>
    <property type="project" value="InterPro"/>
</dbReference>
<dbReference type="GO" id="GO:0006367">
    <property type="term" value="P:transcription initiation at RNA polymerase II promoter"/>
    <property type="evidence" value="ECO:0007669"/>
    <property type="project" value="InterPro"/>
</dbReference>
<dbReference type="FunFam" id="1.10.10.10:FF:000606">
    <property type="entry name" value="Transcription factor E"/>
    <property type="match status" value="1"/>
</dbReference>
<dbReference type="Gene3D" id="1.10.10.10">
    <property type="entry name" value="Winged helix-like DNA-binding domain superfamily/Winged helix DNA-binding domain"/>
    <property type="match status" value="1"/>
</dbReference>
<dbReference type="HAMAP" id="MF_01909">
    <property type="entry name" value="TFE_arch"/>
    <property type="match status" value="1"/>
</dbReference>
<dbReference type="InterPro" id="IPR016481">
    <property type="entry name" value="TF_E_archaea"/>
</dbReference>
<dbReference type="InterPro" id="IPR039997">
    <property type="entry name" value="TFE"/>
</dbReference>
<dbReference type="InterPro" id="IPR017919">
    <property type="entry name" value="TFIIE/TFIIEa_HTH"/>
</dbReference>
<dbReference type="InterPro" id="IPR002853">
    <property type="entry name" value="TFIIE_asu"/>
</dbReference>
<dbReference type="InterPro" id="IPR024550">
    <property type="entry name" value="TFIIEa/SarR/Rpc3_HTH_dom"/>
</dbReference>
<dbReference type="InterPro" id="IPR036388">
    <property type="entry name" value="WH-like_DNA-bd_sf"/>
</dbReference>
<dbReference type="InterPro" id="IPR036390">
    <property type="entry name" value="WH_DNA-bd_sf"/>
</dbReference>
<dbReference type="PANTHER" id="PTHR13097:SF7">
    <property type="entry name" value="GENERAL TRANSCRIPTION FACTOR IIE SUBUNIT 1"/>
    <property type="match status" value="1"/>
</dbReference>
<dbReference type="PANTHER" id="PTHR13097">
    <property type="entry name" value="TRANSCRIPTION INITIATION FACTOR IIE, ALPHA SUBUNIT"/>
    <property type="match status" value="1"/>
</dbReference>
<dbReference type="Pfam" id="PF02002">
    <property type="entry name" value="TFIIE_alpha"/>
    <property type="match status" value="1"/>
</dbReference>
<dbReference type="PIRSF" id="PIRSF006373">
    <property type="entry name" value="TF_E_archaea"/>
    <property type="match status" value="1"/>
</dbReference>
<dbReference type="SMART" id="SM00531">
    <property type="entry name" value="TFIIE"/>
    <property type="match status" value="1"/>
</dbReference>
<dbReference type="SUPFAM" id="SSF46785">
    <property type="entry name" value="Winged helix' DNA-binding domain"/>
    <property type="match status" value="1"/>
</dbReference>
<dbReference type="PROSITE" id="PS51344">
    <property type="entry name" value="HTH_TFE_IIE"/>
    <property type="match status" value="1"/>
</dbReference>
<keyword id="KW-0238">DNA-binding</keyword>
<keyword id="KW-1185">Reference proteome</keyword>
<keyword id="KW-0804">Transcription</keyword>
<keyword id="KW-0805">Transcription regulation</keyword>
<evidence type="ECO:0000255" key="1">
    <source>
        <dbReference type="HAMAP-Rule" id="MF_01909"/>
    </source>
</evidence>
<protein>
    <recommendedName>
        <fullName evidence="1">Transcription factor E</fullName>
        <shortName evidence="1">TFE</shortName>
    </recommendedName>
    <alternativeName>
        <fullName evidence="1">TFIIE subunit alpha homolog</fullName>
    </alternativeName>
    <alternativeName>
        <fullName evidence="1">Transcription initiation factor TFIIE</fullName>
    </alternativeName>
</protein>
<feature type="chain" id="PRO_0000326589" description="Transcription factor E">
    <location>
        <begin position="1"/>
        <end position="171"/>
    </location>
</feature>
<feature type="domain" description="HTH TFE/IIEalpha-type" evidence="1">
    <location>
        <begin position="5"/>
        <end position="88"/>
    </location>
</feature>
<organism>
    <name type="scientific">Cenarchaeum symbiosum (strain A)</name>
    <dbReference type="NCBI Taxonomy" id="414004"/>
    <lineage>
        <taxon>Archaea</taxon>
        <taxon>Nitrososphaerota</taxon>
        <taxon>Candidatus Cenarchaeales</taxon>
        <taxon>Candidatus Cenarchaeaceae</taxon>
        <taxon>Candidatus Cenarchaeum</taxon>
    </lineage>
</organism>
<sequence length="171" mass="20024">MIDKYEDPFIRIAVMIGGDEYLKVARSLLKAEDATDEEIASSTGLRINMVRKVLYDLFGKSLISGVRVKDERKGWFVYRWRSRREEVESFIENQKKKIMGRLQQRLDYENSSEFYHCGNDDCQRITFEGALEEMFKCPSCGKVLNLKKNDKAKKAFGKKIDEIKKDLQQTF</sequence>
<gene>
    <name evidence="1" type="primary">tfe</name>
    <name type="ordered locus">CENSYa_1760</name>
</gene>
<reference key="1">
    <citation type="journal article" date="2006" name="Proc. Natl. Acad. Sci. U.S.A.">
        <title>Genomic analysis of the uncultivated marine crenarchaeote Cenarchaeum symbiosum.</title>
        <authorList>
            <person name="Hallam S.J."/>
            <person name="Konstantinidis K.T."/>
            <person name="Putnam N."/>
            <person name="Schleper C."/>
            <person name="Watanabe Y."/>
            <person name="Sugahara J."/>
            <person name="Preston C."/>
            <person name="de la Torre J."/>
            <person name="Richardson P.M."/>
            <person name="DeLong E.F."/>
        </authorList>
    </citation>
    <scope>NUCLEOTIDE SEQUENCE [LARGE SCALE GENOMIC DNA]</scope>
    <source>
        <strain>A</strain>
    </source>
</reference>
<proteinExistence type="inferred from homology"/>
<comment type="function">
    <text evidence="1">Transcription factor that plays a role in the activation of archaeal genes transcribed by RNA polymerase. Facilitates transcription initiation by enhancing TATA-box recognition by TATA-box-binding protein (Tbp), and transcription factor B (Tfb) and RNA polymerase recruitment. Not absolutely required for transcription in vitro, but particularly important in cases where Tbp or Tfb function is not optimal. It dynamically alters the nucleic acid-binding properties of RNA polymerases by stabilizing the initiation complex and destabilizing elongation complexes. Seems to translocate with the RNA polymerase following initiation and acts by binding to the non template strand of the transcription bubble in elongation complexes.</text>
</comment>
<comment type="subunit">
    <text evidence="1">Monomer. Interaction with RNA polymerase subunits RpoF and RpoE is necessary for Tfe stimulatory transcription activity. Able to interact with Tbp and RNA polymerase in the absence of DNA promoter. Interacts both with the preinitiation and elongation complexes.</text>
</comment>
<comment type="domain">
    <text evidence="1">The winged helix domain is involved in binding to DNA in the preinitiation complex.</text>
</comment>
<comment type="similarity">
    <text evidence="1">Belongs to the TFE family.</text>
</comment>
<accession>A0RYF4</accession>
<name>TFE_CENSY</name>